<feature type="chain" id="PRO_1000020430" description="Threonine--tRNA ligase">
    <location>
        <begin position="1"/>
        <end position="622"/>
    </location>
</feature>
<feature type="region of interest" description="Editing domain" evidence="1">
    <location>
        <begin position="1"/>
        <end position="141"/>
    </location>
</feature>
<feature type="region of interest" description="Catalytic" evidence="1">
    <location>
        <begin position="199"/>
        <end position="498"/>
    </location>
</feature>
<feature type="binding site" evidence="1">
    <location>
        <position position="291"/>
    </location>
    <ligand>
        <name>Zn(2+)</name>
        <dbReference type="ChEBI" id="CHEBI:29105"/>
    </ligand>
</feature>
<feature type="binding site" evidence="1">
    <location>
        <position position="343"/>
    </location>
    <ligand>
        <name>Zn(2+)</name>
        <dbReference type="ChEBI" id="CHEBI:29105"/>
    </ligand>
</feature>
<feature type="binding site" evidence="1">
    <location>
        <position position="467"/>
    </location>
    <ligand>
        <name>Zn(2+)</name>
        <dbReference type="ChEBI" id="CHEBI:29105"/>
    </ligand>
</feature>
<comment type="function">
    <text evidence="1">Catalyzes the attachment of threonine to tRNA(Thr) in a two-step reaction: L-threonine is first activated by ATP to form Thr-AMP and then transferred to the acceptor end of tRNA(Thr). Also edits incorrectly charged L-seryl-tRNA(Thr).</text>
</comment>
<comment type="catalytic activity">
    <reaction evidence="1">
        <text>tRNA(Thr) + L-threonine + ATP = L-threonyl-tRNA(Thr) + AMP + diphosphate + H(+)</text>
        <dbReference type="Rhea" id="RHEA:24624"/>
        <dbReference type="Rhea" id="RHEA-COMP:9670"/>
        <dbReference type="Rhea" id="RHEA-COMP:9704"/>
        <dbReference type="ChEBI" id="CHEBI:15378"/>
        <dbReference type="ChEBI" id="CHEBI:30616"/>
        <dbReference type="ChEBI" id="CHEBI:33019"/>
        <dbReference type="ChEBI" id="CHEBI:57926"/>
        <dbReference type="ChEBI" id="CHEBI:78442"/>
        <dbReference type="ChEBI" id="CHEBI:78534"/>
        <dbReference type="ChEBI" id="CHEBI:456215"/>
        <dbReference type="EC" id="6.1.1.3"/>
    </reaction>
</comment>
<comment type="cofactor">
    <cofactor evidence="1">
        <name>Zn(2+)</name>
        <dbReference type="ChEBI" id="CHEBI:29105"/>
    </cofactor>
    <text evidence="1">Binds 1 zinc ion per subunit.</text>
</comment>
<comment type="subunit">
    <text evidence="1">Homodimer.</text>
</comment>
<comment type="subcellular location">
    <subcellularLocation>
        <location evidence="1">Cytoplasm</location>
    </subcellularLocation>
</comment>
<comment type="domain">
    <text evidence="1">The N-terminal domain is an archaea-specific tRNA-editing domain that hydrolyzes incorrectly charged L-seryl-tRNA(Thr). Catalysis of tRNA editing is performed by the charged tRNA itself.</text>
</comment>
<comment type="similarity">
    <text evidence="1">Belongs to the class-II aminoacyl-tRNA synthetase family.</text>
</comment>
<keyword id="KW-0030">Aminoacyl-tRNA synthetase</keyword>
<keyword id="KW-0067">ATP-binding</keyword>
<keyword id="KW-0963">Cytoplasm</keyword>
<keyword id="KW-0436">Ligase</keyword>
<keyword id="KW-0479">Metal-binding</keyword>
<keyword id="KW-0547">Nucleotide-binding</keyword>
<keyword id="KW-0648">Protein biosynthesis</keyword>
<keyword id="KW-0694">RNA-binding</keyword>
<keyword id="KW-0820">tRNA-binding</keyword>
<keyword id="KW-0862">Zinc</keyword>
<gene>
    <name evidence="1" type="primary">thrS</name>
    <name type="ordered locus">MmarC5_1223</name>
</gene>
<sequence length="622" mass="71212">MKTLLIHSDYLEFEAKEKTKIAEDTDVLNGKMDECLTVFIAVEKDDESDPDAVVKNAVDEIVKTADNLKVKNVVVYPYAHLSSDLGSPATAKEILAEIEKELSGDYEVLRAPFGWYKAFKISCKGHPLSELSRKITTERKEEVKKEKVVSKFYIINGENLELTEVNDEVISKMEDKGLLALLKHELDIKEEGKDNGEPPHVKYIKEKEICDYEPSSDAGHFRWYPKGKLIRDLLSDYVYNLVVENGGMPVETPVMYDLQNNAIREHADKFGERQYRFKQGNKDLMLRFAACFGQFMMKKDMYLLPKHMPLKLYELSTYSFRYEQRGELVGLKRLRAFTMPDMHTVCIDMKQAMEAFEDQLWMGLKTGDDFKTPYAIIFRFTEDFFEENKEWFFGMAKEYKQKYGKDAILEILPGRKHYWVGKVDMAVVDSFGRPIENPTVQIDVESAERFGIVVHDGDKKVQPIILHCSPTGSVERVLCGLLENAYLNTLENKPPALPTWLTPIQARVIPVGDKHAEFALEVATKLRASGIRADFDDREDSMGKKVRNAGTDWVNYVVVIGDSEMESSKLTVTVREESELKKAKKESLTVEELIEKITSDVKDAPKRPLPLPMKCSVQPIFR</sequence>
<name>SYT_METM5</name>
<reference key="1">
    <citation type="submission" date="2007-03" db="EMBL/GenBank/DDBJ databases">
        <title>Complete sequence of chromosome of Methanococcus maripaludis C5.</title>
        <authorList>
            <consortium name="US DOE Joint Genome Institute"/>
            <person name="Copeland A."/>
            <person name="Lucas S."/>
            <person name="Lapidus A."/>
            <person name="Barry K."/>
            <person name="Glavina del Rio T."/>
            <person name="Dalin E."/>
            <person name="Tice H."/>
            <person name="Pitluck S."/>
            <person name="Chertkov O."/>
            <person name="Brettin T."/>
            <person name="Bruce D."/>
            <person name="Han C."/>
            <person name="Detter J.C."/>
            <person name="Schmutz J."/>
            <person name="Larimer F."/>
            <person name="Land M."/>
            <person name="Hauser L."/>
            <person name="Kyrpides N."/>
            <person name="Mikhailova N."/>
            <person name="Sieprawska-Lupa M."/>
            <person name="Whitman W.B."/>
            <person name="Richardson P."/>
        </authorList>
    </citation>
    <scope>NUCLEOTIDE SEQUENCE [LARGE SCALE GENOMIC DNA]</scope>
    <source>
        <strain>C5 / ATCC BAA-1333</strain>
    </source>
</reference>
<protein>
    <recommendedName>
        <fullName evidence="1">Threonine--tRNA ligase</fullName>
        <ecNumber evidence="1">6.1.1.3</ecNumber>
    </recommendedName>
    <alternativeName>
        <fullName evidence="1">Threonyl-tRNA synthetase</fullName>
        <shortName evidence="1">ThrRS</shortName>
    </alternativeName>
</protein>
<dbReference type="EC" id="6.1.1.3" evidence="1"/>
<dbReference type="EMBL" id="CP000609">
    <property type="protein sequence ID" value="ABO35521.1"/>
    <property type="molecule type" value="Genomic_DNA"/>
</dbReference>
<dbReference type="RefSeq" id="WP_011868974.1">
    <property type="nucleotide sequence ID" value="NC_009135.1"/>
</dbReference>
<dbReference type="SMR" id="A4FZ87"/>
<dbReference type="STRING" id="402880.MmarC5_1223"/>
<dbReference type="GeneID" id="4929015"/>
<dbReference type="KEGG" id="mmq:MmarC5_1223"/>
<dbReference type="eggNOG" id="arCOG00401">
    <property type="taxonomic scope" value="Archaea"/>
</dbReference>
<dbReference type="HOGENOM" id="CLU_029833_0_0_2"/>
<dbReference type="OrthoDB" id="372136at2157"/>
<dbReference type="Proteomes" id="UP000000253">
    <property type="component" value="Chromosome"/>
</dbReference>
<dbReference type="GO" id="GO:0005737">
    <property type="term" value="C:cytoplasm"/>
    <property type="evidence" value="ECO:0007669"/>
    <property type="project" value="UniProtKB-SubCell"/>
</dbReference>
<dbReference type="GO" id="GO:0005524">
    <property type="term" value="F:ATP binding"/>
    <property type="evidence" value="ECO:0007669"/>
    <property type="project" value="UniProtKB-UniRule"/>
</dbReference>
<dbReference type="GO" id="GO:0004829">
    <property type="term" value="F:threonine-tRNA ligase activity"/>
    <property type="evidence" value="ECO:0007669"/>
    <property type="project" value="UniProtKB-UniRule"/>
</dbReference>
<dbReference type="GO" id="GO:0000049">
    <property type="term" value="F:tRNA binding"/>
    <property type="evidence" value="ECO:0007669"/>
    <property type="project" value="UniProtKB-KW"/>
</dbReference>
<dbReference type="GO" id="GO:0008270">
    <property type="term" value="F:zinc ion binding"/>
    <property type="evidence" value="ECO:0007669"/>
    <property type="project" value="InterPro"/>
</dbReference>
<dbReference type="GO" id="GO:0006435">
    <property type="term" value="P:threonyl-tRNA aminoacylation"/>
    <property type="evidence" value="ECO:0007669"/>
    <property type="project" value="UniProtKB-UniRule"/>
</dbReference>
<dbReference type="CDD" id="cd00860">
    <property type="entry name" value="ThrRS_anticodon"/>
    <property type="match status" value="1"/>
</dbReference>
<dbReference type="FunFam" id="3.40.50.800:FF:000001">
    <property type="entry name" value="Threonine--tRNA ligase"/>
    <property type="match status" value="1"/>
</dbReference>
<dbReference type="FunFam" id="3.50.80.10:FF:000004">
    <property type="entry name" value="Threonine--tRNA ligase"/>
    <property type="match status" value="1"/>
</dbReference>
<dbReference type="Gene3D" id="3.40.50.800">
    <property type="entry name" value="Anticodon-binding domain"/>
    <property type="match status" value="1"/>
</dbReference>
<dbReference type="Gene3D" id="3.30.930.10">
    <property type="entry name" value="Bira Bifunctional Protein, Domain 2"/>
    <property type="match status" value="1"/>
</dbReference>
<dbReference type="Gene3D" id="3.50.80.10">
    <property type="entry name" value="D-tyrosyl-tRNA(Tyr) deacylase"/>
    <property type="match status" value="1"/>
</dbReference>
<dbReference type="HAMAP" id="MF_00184">
    <property type="entry name" value="Thr_tRNA_synth"/>
    <property type="match status" value="1"/>
</dbReference>
<dbReference type="InterPro" id="IPR002314">
    <property type="entry name" value="aa-tRNA-synt_IIb"/>
</dbReference>
<dbReference type="InterPro" id="IPR006195">
    <property type="entry name" value="aa-tRNA-synth_II"/>
</dbReference>
<dbReference type="InterPro" id="IPR045864">
    <property type="entry name" value="aa-tRNA-synth_II/BPL/LPL"/>
</dbReference>
<dbReference type="InterPro" id="IPR004154">
    <property type="entry name" value="Anticodon-bd"/>
</dbReference>
<dbReference type="InterPro" id="IPR036621">
    <property type="entry name" value="Anticodon-bd_dom_sf"/>
</dbReference>
<dbReference type="InterPro" id="IPR023509">
    <property type="entry name" value="DTD-like_sf"/>
</dbReference>
<dbReference type="InterPro" id="IPR002320">
    <property type="entry name" value="Thr-tRNA-ligase_IIa"/>
</dbReference>
<dbReference type="InterPro" id="IPR015011">
    <property type="entry name" value="Threonyl-tRNA_syn_edit_dom_arc"/>
</dbReference>
<dbReference type="InterPro" id="IPR047246">
    <property type="entry name" value="ThrRS_anticodon"/>
</dbReference>
<dbReference type="NCBIfam" id="NF003068">
    <property type="entry name" value="PRK03991.1"/>
    <property type="match status" value="1"/>
</dbReference>
<dbReference type="NCBIfam" id="TIGR00418">
    <property type="entry name" value="thrS"/>
    <property type="match status" value="1"/>
</dbReference>
<dbReference type="PANTHER" id="PTHR11451:SF44">
    <property type="entry name" value="THREONINE--TRNA LIGASE, CHLOROPLASTIC_MITOCHONDRIAL 2"/>
    <property type="match status" value="1"/>
</dbReference>
<dbReference type="PANTHER" id="PTHR11451">
    <property type="entry name" value="THREONINE-TRNA LIGASE"/>
    <property type="match status" value="1"/>
</dbReference>
<dbReference type="Pfam" id="PF03129">
    <property type="entry name" value="HGTP_anticodon"/>
    <property type="match status" value="1"/>
</dbReference>
<dbReference type="Pfam" id="PF00587">
    <property type="entry name" value="tRNA-synt_2b"/>
    <property type="match status" value="1"/>
</dbReference>
<dbReference type="Pfam" id="PF08915">
    <property type="entry name" value="tRNA-Thr_ED"/>
    <property type="match status" value="1"/>
</dbReference>
<dbReference type="PRINTS" id="PR01047">
    <property type="entry name" value="TRNASYNTHTHR"/>
</dbReference>
<dbReference type="SUPFAM" id="SSF52954">
    <property type="entry name" value="Class II aaRS ABD-related"/>
    <property type="match status" value="1"/>
</dbReference>
<dbReference type="SUPFAM" id="SSF55681">
    <property type="entry name" value="Class II aaRS and biotin synthetases"/>
    <property type="match status" value="1"/>
</dbReference>
<dbReference type="PROSITE" id="PS50862">
    <property type="entry name" value="AA_TRNA_LIGASE_II"/>
    <property type="match status" value="1"/>
</dbReference>
<evidence type="ECO:0000255" key="1">
    <source>
        <dbReference type="HAMAP-Rule" id="MF_00184"/>
    </source>
</evidence>
<organism>
    <name type="scientific">Methanococcus maripaludis (strain C5 / ATCC BAA-1333)</name>
    <dbReference type="NCBI Taxonomy" id="402880"/>
    <lineage>
        <taxon>Archaea</taxon>
        <taxon>Methanobacteriati</taxon>
        <taxon>Methanobacteriota</taxon>
        <taxon>Methanomada group</taxon>
        <taxon>Methanococci</taxon>
        <taxon>Methanococcales</taxon>
        <taxon>Methanococcaceae</taxon>
        <taxon>Methanococcus</taxon>
    </lineage>
</organism>
<accession>A4FZ87</accession>
<proteinExistence type="inferred from homology"/>